<name>SNR40_BOVIN</name>
<accession>Q2HJH6</accession>
<dbReference type="EMBL" id="BC105383">
    <property type="protein sequence ID" value="AAI05384.1"/>
    <property type="molecule type" value="mRNA"/>
</dbReference>
<dbReference type="RefSeq" id="NP_001039847.1">
    <property type="nucleotide sequence ID" value="NM_001046382.2"/>
</dbReference>
<dbReference type="SMR" id="Q2HJH6"/>
<dbReference type="FunCoup" id="Q2HJH6">
    <property type="interactions" value="5434"/>
</dbReference>
<dbReference type="STRING" id="9913.ENSBTAP00000022372"/>
<dbReference type="PaxDb" id="9913-ENSBTAP00000022372"/>
<dbReference type="GeneID" id="534645"/>
<dbReference type="KEGG" id="bta:534645"/>
<dbReference type="CTD" id="9410"/>
<dbReference type="eggNOG" id="KOG0265">
    <property type="taxonomic scope" value="Eukaryota"/>
</dbReference>
<dbReference type="InParanoid" id="Q2HJH6"/>
<dbReference type="OrthoDB" id="1068471at2759"/>
<dbReference type="Proteomes" id="UP000009136">
    <property type="component" value="Unplaced"/>
</dbReference>
<dbReference type="GO" id="GO:0071013">
    <property type="term" value="C:catalytic step 2 spliceosome"/>
    <property type="evidence" value="ECO:0000318"/>
    <property type="project" value="GO_Central"/>
</dbReference>
<dbReference type="GO" id="GO:0006397">
    <property type="term" value="P:mRNA processing"/>
    <property type="evidence" value="ECO:0007669"/>
    <property type="project" value="UniProtKB-KW"/>
</dbReference>
<dbReference type="GO" id="GO:0008380">
    <property type="term" value="P:RNA splicing"/>
    <property type="evidence" value="ECO:0007669"/>
    <property type="project" value="UniProtKB-KW"/>
</dbReference>
<dbReference type="CDD" id="cd00200">
    <property type="entry name" value="WD40"/>
    <property type="match status" value="1"/>
</dbReference>
<dbReference type="FunFam" id="2.130.10.10:FF:000229">
    <property type="entry name" value="Small nuclear ribonucleoprotein U5 subunit 40"/>
    <property type="match status" value="1"/>
</dbReference>
<dbReference type="Gene3D" id="2.130.10.10">
    <property type="entry name" value="YVTN repeat-like/Quinoprotein amine dehydrogenase"/>
    <property type="match status" value="1"/>
</dbReference>
<dbReference type="InterPro" id="IPR020472">
    <property type="entry name" value="G-protein_beta_WD-40_rep"/>
</dbReference>
<dbReference type="InterPro" id="IPR052234">
    <property type="entry name" value="U5_snRNP_Component"/>
</dbReference>
<dbReference type="InterPro" id="IPR015943">
    <property type="entry name" value="WD40/YVTN_repeat-like_dom_sf"/>
</dbReference>
<dbReference type="InterPro" id="IPR019775">
    <property type="entry name" value="WD40_repeat_CS"/>
</dbReference>
<dbReference type="InterPro" id="IPR036322">
    <property type="entry name" value="WD40_repeat_dom_sf"/>
</dbReference>
<dbReference type="InterPro" id="IPR001680">
    <property type="entry name" value="WD40_rpt"/>
</dbReference>
<dbReference type="PANTHER" id="PTHR44006">
    <property type="entry name" value="U5 SMALL NUCLEAR RIBONUCLEOPROTEIN 40 KDA PROTEIN"/>
    <property type="match status" value="1"/>
</dbReference>
<dbReference type="PANTHER" id="PTHR44006:SF1">
    <property type="entry name" value="U5 SMALL NUCLEAR RIBONUCLEOPROTEIN 40 KDA PROTEIN"/>
    <property type="match status" value="1"/>
</dbReference>
<dbReference type="Pfam" id="PF00400">
    <property type="entry name" value="WD40"/>
    <property type="match status" value="7"/>
</dbReference>
<dbReference type="PRINTS" id="PR00320">
    <property type="entry name" value="GPROTEINBRPT"/>
</dbReference>
<dbReference type="SMART" id="SM00320">
    <property type="entry name" value="WD40"/>
    <property type="match status" value="7"/>
</dbReference>
<dbReference type="SUPFAM" id="SSF50978">
    <property type="entry name" value="WD40 repeat-like"/>
    <property type="match status" value="1"/>
</dbReference>
<dbReference type="PROSITE" id="PS00678">
    <property type="entry name" value="WD_REPEATS_1"/>
    <property type="match status" value="5"/>
</dbReference>
<dbReference type="PROSITE" id="PS50082">
    <property type="entry name" value="WD_REPEATS_2"/>
    <property type="match status" value="7"/>
</dbReference>
<dbReference type="PROSITE" id="PS50294">
    <property type="entry name" value="WD_REPEATS_REGION"/>
    <property type="match status" value="1"/>
</dbReference>
<reference key="1">
    <citation type="submission" date="2005-09" db="EMBL/GenBank/DDBJ databases">
        <authorList>
            <consortium name="NIH - Mammalian Gene Collection (MGC) project"/>
        </authorList>
    </citation>
    <scope>NUCLEOTIDE SEQUENCE [LARGE SCALE MRNA]</scope>
    <source>
        <strain>Hereford</strain>
        <tissue>Testis</tissue>
    </source>
</reference>
<sequence>MIEQQKRKGPELPLVPVKRQRHELLLGAAGSGPGAGQQQAAPGALLQAGPPRCSSLQAPIMLLSGHEGEVYCCKFHPNGSTLASAGFDRLILLWNVYGDCDNYATLKGHSGAVMELHYNTDGSMLFSASTDKTVAVWDSETGERVKRLKGHTSFVNSCYPARRGPQLVCTGSDDGTVKLWDIRKKAAIQTFQNTYQVLAVTFNDTSDQIISGGIDNDIKVWDLRQNKLTYTMRGHADSVTGLSLSSEGSYLLSNAMDNTVRVWDVRPFAPKERCVRIFQGNVHNFEKNLLRCSWSPDGSKIAAGSADRFVYVWDTTSRRILYKLPGHAGSINEVAFHPDEPIILSASSDKRLYMGEIQ</sequence>
<comment type="function">
    <text evidence="2">Required for pre-mRNA splicing as component of the activated spliceosome. Component of the U5 small nuclear ribonucleoprotein (snRNP) complex and the U4/U6-U5 tri-snRNP complex, building blocks of the spliceosome. As a component of the minor spliceosome, involved in the splicing of U12-type introns in pre-mRNAs (By similarity).</text>
</comment>
<comment type="subunit">
    <text evidence="2">Component of the pre-catalytic and catalytic spliceosome complexes. Component of the postcatalytic spliceosome P complex. Part of the U5 snRNP complex. Interacts with PRPF8. Component of the U4/U6-U5 tri-snRNP complex composed of the U4, U6 and U5 snRNAs and at least PRPF3, PRPF4, PRPF6, PRPF8, PRPF31, SNRNP200, TXNL4A, WDR57, SNRNP40, DDX23, CD2BP2, PPIH, SNU13, EFTUD2, SART1 and USP39. Component of the minor spliceosome, which splices U12-type introns (By similarity).</text>
</comment>
<comment type="subcellular location">
    <subcellularLocation>
        <location evidence="2">Nucleus</location>
    </subcellularLocation>
</comment>
<organism>
    <name type="scientific">Bos taurus</name>
    <name type="common">Bovine</name>
    <dbReference type="NCBI Taxonomy" id="9913"/>
    <lineage>
        <taxon>Eukaryota</taxon>
        <taxon>Metazoa</taxon>
        <taxon>Chordata</taxon>
        <taxon>Craniata</taxon>
        <taxon>Vertebrata</taxon>
        <taxon>Euteleostomi</taxon>
        <taxon>Mammalia</taxon>
        <taxon>Eutheria</taxon>
        <taxon>Laurasiatheria</taxon>
        <taxon>Artiodactyla</taxon>
        <taxon>Ruminantia</taxon>
        <taxon>Pecora</taxon>
        <taxon>Bovidae</taxon>
        <taxon>Bovinae</taxon>
        <taxon>Bos</taxon>
    </lineage>
</organism>
<gene>
    <name type="primary">SNRNP40</name>
    <name type="synonym">WDR57</name>
</gene>
<protein>
    <recommendedName>
        <fullName>U5 small nuclear ribonucleoprotein 40 kDa protein</fullName>
        <shortName>U5 snRNP 40 kDa protein</shortName>
    </recommendedName>
    <alternativeName>
        <fullName>WD repeat-containing protein 57</fullName>
    </alternativeName>
</protein>
<feature type="chain" id="PRO_0000246075" description="U5 small nuclear ribonucleoprotein 40 kDa protein">
    <location>
        <begin position="1"/>
        <end position="358"/>
    </location>
</feature>
<feature type="repeat" description="WD 1">
    <location>
        <begin position="65"/>
        <end position="104"/>
    </location>
</feature>
<feature type="repeat" description="WD 2">
    <location>
        <begin position="108"/>
        <end position="147"/>
    </location>
</feature>
<feature type="repeat" description="WD 3">
    <location>
        <begin position="150"/>
        <end position="190"/>
    </location>
</feature>
<feature type="repeat" description="WD 4">
    <location>
        <begin position="192"/>
        <end position="231"/>
    </location>
</feature>
<feature type="repeat" description="WD 5">
    <location>
        <begin position="234"/>
        <end position="273"/>
    </location>
</feature>
<feature type="repeat" description="WD 6">
    <location>
        <begin position="284"/>
        <end position="323"/>
    </location>
</feature>
<feature type="repeat" description="WD 7">
    <location>
        <begin position="326"/>
        <end position="358"/>
    </location>
</feature>
<feature type="modified residue" description="Asymmetric dimethylarginine" evidence="1">
    <location>
        <position position="21"/>
    </location>
</feature>
<feature type="cross-link" description="Glycyl lysine isopeptide (Lys-Gly) (interchain with G-Cter in SUMO2)" evidence="2">
    <location>
        <position position="18"/>
    </location>
</feature>
<feature type="cross-link" description="Glycyl lysine isopeptide (Lys-Gly) (interchain with G-Cter in SUMO2)" evidence="2">
    <location>
        <position position="271"/>
    </location>
</feature>
<keyword id="KW-1017">Isopeptide bond</keyword>
<keyword id="KW-0488">Methylation</keyword>
<keyword id="KW-0507">mRNA processing</keyword>
<keyword id="KW-0508">mRNA splicing</keyword>
<keyword id="KW-0539">Nucleus</keyword>
<keyword id="KW-1185">Reference proteome</keyword>
<keyword id="KW-0677">Repeat</keyword>
<keyword id="KW-0747">Spliceosome</keyword>
<keyword id="KW-0832">Ubl conjugation</keyword>
<keyword id="KW-0853">WD repeat</keyword>
<evidence type="ECO:0000250" key="1">
    <source>
        <dbReference type="UniProtKB" id="Q6PE01"/>
    </source>
</evidence>
<evidence type="ECO:0000250" key="2">
    <source>
        <dbReference type="UniProtKB" id="Q96DI7"/>
    </source>
</evidence>
<proteinExistence type="evidence at transcript level"/>